<comment type="similarity">
    <text evidence="1">Belongs to the UPF0145 family.</text>
</comment>
<sequence length="119" mass="12592">MIDTTRSLDDLSPARVTTAFDLPGHTTVRSLGVAQGIIVRSRSIVGSFGAALQTIFGGNITLYTSLCEKAREHAFEKMLADARKVGANAIVAMRYDSTEIGSGVTEVICYGTAVIVEPA</sequence>
<feature type="chain" id="PRO_0000225818" description="UPF0145 protein Bcep18194_B0595">
    <location>
        <begin position="1"/>
        <end position="119"/>
    </location>
</feature>
<name>Y595_BURL3</name>
<evidence type="ECO:0000255" key="1">
    <source>
        <dbReference type="HAMAP-Rule" id="MF_00338"/>
    </source>
</evidence>
<protein>
    <recommendedName>
        <fullName evidence="1">UPF0145 protein Bcep18194_B0595</fullName>
    </recommendedName>
</protein>
<accession>Q39A02</accession>
<gene>
    <name type="ordered locus">Bcep18194_B0595</name>
</gene>
<reference key="1">
    <citation type="submission" date="2005-10" db="EMBL/GenBank/DDBJ databases">
        <title>Complete sequence of chromosome 2 of Burkholderia sp. 383.</title>
        <authorList>
            <consortium name="US DOE Joint Genome Institute"/>
            <person name="Copeland A."/>
            <person name="Lucas S."/>
            <person name="Lapidus A."/>
            <person name="Barry K."/>
            <person name="Detter J.C."/>
            <person name="Glavina T."/>
            <person name="Hammon N."/>
            <person name="Israni S."/>
            <person name="Pitluck S."/>
            <person name="Chain P."/>
            <person name="Malfatti S."/>
            <person name="Shin M."/>
            <person name="Vergez L."/>
            <person name="Schmutz J."/>
            <person name="Larimer F."/>
            <person name="Land M."/>
            <person name="Kyrpides N."/>
            <person name="Lykidis A."/>
            <person name="Richardson P."/>
        </authorList>
    </citation>
    <scope>NUCLEOTIDE SEQUENCE [LARGE SCALE GENOMIC DNA]</scope>
    <source>
        <strain>ATCC 17760 / DSM 23089 / LMG 22485 / NCIMB 9086 / R18194 / 383</strain>
    </source>
</reference>
<dbReference type="EMBL" id="CP000152">
    <property type="protein sequence ID" value="ABB10709.1"/>
    <property type="molecule type" value="Genomic_DNA"/>
</dbReference>
<dbReference type="RefSeq" id="WP_011354203.1">
    <property type="nucleotide sequence ID" value="NC_007511.1"/>
</dbReference>
<dbReference type="SMR" id="Q39A02"/>
<dbReference type="GeneID" id="45096969"/>
<dbReference type="KEGG" id="bur:Bcep18194_B0595"/>
<dbReference type="PATRIC" id="fig|482957.22.peg.4205"/>
<dbReference type="HOGENOM" id="CLU_117144_1_1_4"/>
<dbReference type="Proteomes" id="UP000002705">
    <property type="component" value="Chromosome 2"/>
</dbReference>
<dbReference type="Gene3D" id="3.30.110.70">
    <property type="entry name" value="Hypothetical protein apc22750. Chain B"/>
    <property type="match status" value="1"/>
</dbReference>
<dbReference type="HAMAP" id="MF_00338">
    <property type="entry name" value="UPF0145"/>
    <property type="match status" value="1"/>
</dbReference>
<dbReference type="InterPro" id="IPR035439">
    <property type="entry name" value="UPF0145_dom_sf"/>
</dbReference>
<dbReference type="InterPro" id="IPR002765">
    <property type="entry name" value="UPF0145_YbjQ-like"/>
</dbReference>
<dbReference type="PANTHER" id="PTHR34068:SF2">
    <property type="entry name" value="UPF0145 PROTEIN SCO3412"/>
    <property type="match status" value="1"/>
</dbReference>
<dbReference type="PANTHER" id="PTHR34068">
    <property type="entry name" value="UPF0145 PROTEIN YBJQ"/>
    <property type="match status" value="1"/>
</dbReference>
<dbReference type="Pfam" id="PF01906">
    <property type="entry name" value="YbjQ_1"/>
    <property type="match status" value="1"/>
</dbReference>
<dbReference type="SUPFAM" id="SSF117782">
    <property type="entry name" value="YbjQ-like"/>
    <property type="match status" value="1"/>
</dbReference>
<organism>
    <name type="scientific">Burkholderia lata (strain ATCC 17760 / DSM 23089 / LMG 22485 / NCIMB 9086 / R18194 / 383)</name>
    <dbReference type="NCBI Taxonomy" id="482957"/>
    <lineage>
        <taxon>Bacteria</taxon>
        <taxon>Pseudomonadati</taxon>
        <taxon>Pseudomonadota</taxon>
        <taxon>Betaproteobacteria</taxon>
        <taxon>Burkholderiales</taxon>
        <taxon>Burkholderiaceae</taxon>
        <taxon>Burkholderia</taxon>
        <taxon>Burkholderia cepacia complex</taxon>
    </lineage>
</organism>
<proteinExistence type="inferred from homology"/>